<sequence length="453" mass="51985">MKTKFCTGGEAEPSPLGLLLSCGGNAAPTPGVGQQRDAAGELESKQLGGRTQPLALPPPPPPPLPLPPPPSPPLADEQPEPRTRRRAYLWCKEFLPGAWRGLREDQFHISVIRGGLSNMLFQCSLPDSIASVGDEPRKVLLRLYGAILKMRSCNKEGSEQAQNENEFQGAEAMVLESVMFAILAERSLGPKLFGIFPQGRLEQFIPSRRLDTEELRLPDISAEIAEKMATFHGMKMPFNKEPKWLFGTMEKYLNQVLRLKFSREARVQQLHKILSYNLPLELENLRSLLQYTRSPVVFCHNDCQEGNILLLEGQENSERRKLMLIDFEYSSYNYRGFDIGNHFCEWMYDYTYEKYPFFRANIQKYPSRKQQLHFISSYLTTFQNDFESLSSEEQFATKEDMLLEVNRFALASHFLWGLWSIVQAKISSIEFGYMEYAQARFEAYFDQKRKLGV</sequence>
<gene>
    <name type="primary">Chka</name>
    <name type="synonym">Chk</name>
</gene>
<feature type="chain" id="PRO_0000206220" description="Choline kinase alpha">
    <location>
        <begin position="1"/>
        <end position="453"/>
    </location>
</feature>
<feature type="region of interest" description="Disordered" evidence="3">
    <location>
        <begin position="22"/>
        <end position="81"/>
    </location>
</feature>
<feature type="compositionally biased region" description="Pro residues" evidence="3">
    <location>
        <begin position="55"/>
        <end position="73"/>
    </location>
</feature>
<feature type="binding site" evidence="1">
    <location>
        <begin position="113"/>
        <end position="119"/>
    </location>
    <ligand>
        <name>ATP</name>
        <dbReference type="ChEBI" id="CHEBI:30616"/>
    </ligand>
</feature>
<feature type="binding site" evidence="1">
    <location>
        <begin position="115"/>
        <end position="117"/>
    </location>
    <ligand>
        <name>phosphocholine</name>
        <dbReference type="ChEBI" id="CHEBI:295975"/>
    </ligand>
</feature>
<feature type="binding site" evidence="1">
    <location>
        <position position="142"/>
    </location>
    <ligand>
        <name>ATP</name>
        <dbReference type="ChEBI" id="CHEBI:30616"/>
    </ligand>
</feature>
<feature type="binding site" evidence="1">
    <location>
        <begin position="203"/>
        <end position="209"/>
    </location>
    <ligand>
        <name>ATP</name>
        <dbReference type="ChEBI" id="CHEBI:30616"/>
    </ligand>
</feature>
<feature type="binding site" evidence="1">
    <location>
        <position position="304"/>
    </location>
    <ligand>
        <name>ATP</name>
        <dbReference type="ChEBI" id="CHEBI:30616"/>
    </ligand>
</feature>
<feature type="binding site" evidence="1">
    <location>
        <position position="326"/>
    </location>
    <ligand>
        <name>ATP</name>
        <dbReference type="ChEBI" id="CHEBI:30616"/>
    </ligand>
</feature>
<feature type="modified residue" description="Phosphoserine" evidence="2">
    <location>
        <position position="71"/>
    </location>
</feature>
<feature type="modified residue" description="N6-acetyllysine" evidence="1">
    <location>
        <position position="243"/>
    </location>
</feature>
<feature type="modified residue" description="Phosphoserine" evidence="1">
    <location>
        <position position="275"/>
    </location>
</feature>
<feature type="splice variant" id="VSP_009684" description="In isoform 2." evidence="8 9">
    <location>
        <begin position="151"/>
        <end position="168"/>
    </location>
</feature>
<feature type="sequence conflict" description="In Ref. 1; BAA24898 and 2; BAA88154/BAA88153." evidence="10" ref="1 2">
    <original>F</original>
    <variation>Y</variation>
    <location>
        <position position="193"/>
    </location>
</feature>
<evidence type="ECO:0000250" key="1">
    <source>
        <dbReference type="UniProtKB" id="P35790"/>
    </source>
</evidence>
<evidence type="ECO:0000250" key="2">
    <source>
        <dbReference type="UniProtKB" id="Q01134"/>
    </source>
</evidence>
<evidence type="ECO:0000256" key="3">
    <source>
        <dbReference type="SAM" id="MobiDB-lite"/>
    </source>
</evidence>
<evidence type="ECO:0000269" key="4">
    <source>
    </source>
</evidence>
<evidence type="ECO:0000269" key="5">
    <source>
    </source>
</evidence>
<evidence type="ECO:0000269" key="6">
    <source>
    </source>
</evidence>
<evidence type="ECO:0000303" key="7">
    <source>
    </source>
</evidence>
<evidence type="ECO:0000303" key="8">
    <source>
    </source>
</evidence>
<evidence type="ECO:0000303" key="9">
    <source>
    </source>
</evidence>
<evidence type="ECO:0000305" key="10"/>
<dbReference type="EC" id="2.7.1.32" evidence="1"/>
<dbReference type="EC" id="2.7.1.82" evidence="1"/>
<dbReference type="EMBL" id="AB011002">
    <property type="protein sequence ID" value="BAA24898.1"/>
    <property type="molecule type" value="mRNA"/>
</dbReference>
<dbReference type="EMBL" id="AB030621">
    <property type="protein sequence ID" value="BAA88153.1"/>
    <property type="molecule type" value="Genomic_DNA"/>
</dbReference>
<dbReference type="EMBL" id="AB030621">
    <property type="protein sequence ID" value="BAA88154.1"/>
    <property type="status" value="ALT_SEQ"/>
    <property type="molecule type" value="Genomic_DNA"/>
</dbReference>
<dbReference type="EMBL" id="AC133523">
    <property type="status" value="NOT_ANNOTATED_CDS"/>
    <property type="molecule type" value="Genomic_DNA"/>
</dbReference>
<dbReference type="EMBL" id="CH466612">
    <property type="protein sequence ID" value="EDL32956.1"/>
    <property type="molecule type" value="Genomic_DNA"/>
</dbReference>
<dbReference type="EMBL" id="BC056758">
    <property type="protein sequence ID" value="AAH56758.1"/>
    <property type="status" value="ALT_SEQ"/>
    <property type="molecule type" value="mRNA"/>
</dbReference>
<dbReference type="EMBL" id="BC060218">
    <property type="status" value="NOT_ANNOTATED_CDS"/>
    <property type="molecule type" value="mRNA"/>
</dbReference>
<dbReference type="EMBL" id="AK014174">
    <property type="protein sequence ID" value="BAB29191.1"/>
    <property type="status" value="ALT_SEQ"/>
    <property type="molecule type" value="mRNA"/>
</dbReference>
<dbReference type="EMBL" id="AK052056">
    <property type="protein sequence ID" value="BAC34841.1"/>
    <property type="status" value="ALT_SEQ"/>
    <property type="molecule type" value="mRNA"/>
</dbReference>
<dbReference type="EMBL" id="AK053818">
    <property type="protein sequence ID" value="BAC35539.1"/>
    <property type="status" value="ALT_SEQ"/>
    <property type="molecule type" value="mRNA"/>
</dbReference>
<dbReference type="CCDS" id="CCDS29400.1">
    <molecule id="O54804-2"/>
</dbReference>
<dbReference type="CCDS" id="CCDS70913.1">
    <molecule id="O54804-1"/>
</dbReference>
<dbReference type="RefSeq" id="NP_001258425.1">
    <molecule id="O54804-1"/>
    <property type="nucleotide sequence ID" value="NM_001271496.2"/>
</dbReference>
<dbReference type="RefSeq" id="NP_038518.2">
    <molecule id="O54804-2"/>
    <property type="nucleotide sequence ID" value="NM_013490.5"/>
</dbReference>
<dbReference type="SMR" id="O54804"/>
<dbReference type="BioGRID" id="198701">
    <property type="interactions" value="1"/>
</dbReference>
<dbReference type="FunCoup" id="O54804">
    <property type="interactions" value="1271"/>
</dbReference>
<dbReference type="STRING" id="10090.ENSMUSP00000025760"/>
<dbReference type="GlyGen" id="O54804">
    <property type="glycosylation" value="1 site"/>
</dbReference>
<dbReference type="iPTMnet" id="O54804"/>
<dbReference type="PhosphoSitePlus" id="O54804"/>
<dbReference type="PaxDb" id="10090-ENSMUSP00000071933"/>
<dbReference type="PeptideAtlas" id="O54804"/>
<dbReference type="ProteomicsDB" id="281669">
    <molecule id="O54804-1"/>
</dbReference>
<dbReference type="ProteomicsDB" id="281670">
    <molecule id="O54804-2"/>
</dbReference>
<dbReference type="Pumba" id="O54804"/>
<dbReference type="Antibodypedia" id="16639">
    <property type="antibodies" value="224 antibodies from 29 providers"/>
</dbReference>
<dbReference type="DNASU" id="12660"/>
<dbReference type="Ensembl" id="ENSMUST00000025760.13">
    <molecule id="O54804-1"/>
    <property type="protein sequence ID" value="ENSMUSP00000025760.7"/>
    <property type="gene ID" value="ENSMUSG00000024843.16"/>
</dbReference>
<dbReference type="Ensembl" id="ENSMUST00000072055.13">
    <molecule id="O54804-2"/>
    <property type="protein sequence ID" value="ENSMUSP00000071933.7"/>
    <property type="gene ID" value="ENSMUSG00000024843.16"/>
</dbReference>
<dbReference type="GeneID" id="12660"/>
<dbReference type="KEGG" id="mmu:12660"/>
<dbReference type="UCSC" id="uc008fxg.2">
    <molecule id="O54804-2"/>
    <property type="organism name" value="mouse"/>
</dbReference>
<dbReference type="UCSC" id="uc008fxh.2">
    <molecule id="O54804-1"/>
    <property type="organism name" value="mouse"/>
</dbReference>
<dbReference type="AGR" id="MGI:107760"/>
<dbReference type="CTD" id="1119"/>
<dbReference type="MGI" id="MGI:107760">
    <property type="gene designation" value="Chka"/>
</dbReference>
<dbReference type="VEuPathDB" id="HostDB:ENSMUSG00000024843"/>
<dbReference type="eggNOG" id="KOG2686">
    <property type="taxonomic scope" value="Eukaryota"/>
</dbReference>
<dbReference type="GeneTree" id="ENSGT00950000182939"/>
<dbReference type="HOGENOM" id="CLU_012712_2_1_1"/>
<dbReference type="InParanoid" id="O54804"/>
<dbReference type="OMA" id="EAPYYKI"/>
<dbReference type="OrthoDB" id="3649325at2759"/>
<dbReference type="PhylomeDB" id="O54804"/>
<dbReference type="TreeFam" id="TF313549"/>
<dbReference type="Reactome" id="R-MMU-1483191">
    <property type="pathway name" value="Synthesis of PC"/>
</dbReference>
<dbReference type="Reactome" id="R-MMU-1483213">
    <property type="pathway name" value="Synthesis of PE"/>
</dbReference>
<dbReference type="UniPathway" id="UPA00558">
    <property type="reaction ID" value="UER00741"/>
</dbReference>
<dbReference type="UniPathway" id="UPA00753">
    <property type="reaction ID" value="UER00737"/>
</dbReference>
<dbReference type="BioGRID-ORCS" id="12660">
    <property type="hits" value="3 hits in 79 CRISPR screens"/>
</dbReference>
<dbReference type="ChiTaRS" id="Chka">
    <property type="organism name" value="mouse"/>
</dbReference>
<dbReference type="PRO" id="PR:O54804"/>
<dbReference type="Proteomes" id="UP000000589">
    <property type="component" value="Chromosome 19"/>
</dbReference>
<dbReference type="RNAct" id="O54804">
    <property type="molecule type" value="protein"/>
</dbReference>
<dbReference type="Bgee" id="ENSMUSG00000024843">
    <property type="expression patterns" value="Expressed in prostate gland ventral lobe and 256 other cell types or tissues"/>
</dbReference>
<dbReference type="ExpressionAtlas" id="O54804">
    <property type="expression patterns" value="baseline and differential"/>
</dbReference>
<dbReference type="GO" id="GO:0005829">
    <property type="term" value="C:cytosol"/>
    <property type="evidence" value="ECO:0000250"/>
    <property type="project" value="UniProtKB"/>
</dbReference>
<dbReference type="GO" id="GO:0005811">
    <property type="term" value="C:lipid droplet"/>
    <property type="evidence" value="ECO:0000250"/>
    <property type="project" value="UniProtKB"/>
</dbReference>
<dbReference type="GO" id="GO:0005524">
    <property type="term" value="F:ATP binding"/>
    <property type="evidence" value="ECO:0007669"/>
    <property type="project" value="UniProtKB-KW"/>
</dbReference>
<dbReference type="GO" id="GO:0004103">
    <property type="term" value="F:choline kinase activity"/>
    <property type="evidence" value="ECO:0000314"/>
    <property type="project" value="MGI"/>
</dbReference>
<dbReference type="GO" id="GO:0004104">
    <property type="term" value="F:cholinesterase activity"/>
    <property type="evidence" value="ECO:0000314"/>
    <property type="project" value="MGI"/>
</dbReference>
<dbReference type="GO" id="GO:0004305">
    <property type="term" value="F:ethanolamine kinase activity"/>
    <property type="evidence" value="ECO:0000250"/>
    <property type="project" value="UniProtKB"/>
</dbReference>
<dbReference type="GO" id="GO:0042802">
    <property type="term" value="F:identical protein binding"/>
    <property type="evidence" value="ECO:0000353"/>
    <property type="project" value="MGI"/>
</dbReference>
<dbReference type="GO" id="GO:0042803">
    <property type="term" value="F:protein homodimerization activity"/>
    <property type="evidence" value="ECO:0000250"/>
    <property type="project" value="UniProtKB"/>
</dbReference>
<dbReference type="GO" id="GO:0004713">
    <property type="term" value="F:protein tyrosine kinase activity"/>
    <property type="evidence" value="ECO:0000250"/>
    <property type="project" value="UniProtKB"/>
</dbReference>
<dbReference type="GO" id="GO:0042149">
    <property type="term" value="P:cellular response to glucose starvation"/>
    <property type="evidence" value="ECO:0000250"/>
    <property type="project" value="UniProtKB"/>
</dbReference>
<dbReference type="GO" id="GO:1905691">
    <property type="term" value="P:lipid droplet disassembly"/>
    <property type="evidence" value="ECO:0000250"/>
    <property type="project" value="UniProtKB"/>
</dbReference>
<dbReference type="GO" id="GO:0006656">
    <property type="term" value="P:phosphatidylcholine biosynthetic process"/>
    <property type="evidence" value="ECO:0000314"/>
    <property type="project" value="MGI"/>
</dbReference>
<dbReference type="GO" id="GO:0006646">
    <property type="term" value="P:phosphatidylethanolamine biosynthetic process"/>
    <property type="evidence" value="ECO:0000250"/>
    <property type="project" value="UniProtKB"/>
</dbReference>
<dbReference type="CDD" id="cd05156">
    <property type="entry name" value="ChoK_euk"/>
    <property type="match status" value="1"/>
</dbReference>
<dbReference type="FunFam" id="3.90.1200.10:FF:000005">
    <property type="entry name" value="Choline kinase alpha"/>
    <property type="match status" value="1"/>
</dbReference>
<dbReference type="Gene3D" id="3.90.1200.10">
    <property type="match status" value="1"/>
</dbReference>
<dbReference type="Gene3D" id="3.30.200.20">
    <property type="entry name" value="Phosphorylase Kinase, domain 1"/>
    <property type="match status" value="1"/>
</dbReference>
<dbReference type="InterPro" id="IPR011009">
    <property type="entry name" value="Kinase-like_dom_sf"/>
</dbReference>
<dbReference type="PANTHER" id="PTHR22603:SF36">
    <property type="entry name" value="CHOLINE KINASE ALPHA"/>
    <property type="match status" value="1"/>
</dbReference>
<dbReference type="PANTHER" id="PTHR22603">
    <property type="entry name" value="CHOLINE/ETHANOALAMINE KINASE"/>
    <property type="match status" value="1"/>
</dbReference>
<dbReference type="Pfam" id="PF01633">
    <property type="entry name" value="Choline_kinase"/>
    <property type="match status" value="1"/>
</dbReference>
<dbReference type="SUPFAM" id="SSF56112">
    <property type="entry name" value="Protein kinase-like (PK-like)"/>
    <property type="match status" value="1"/>
</dbReference>
<keyword id="KW-0007">Acetylation</keyword>
<keyword id="KW-0025">Alternative splicing</keyword>
<keyword id="KW-0067">ATP-binding</keyword>
<keyword id="KW-0963">Cytoplasm</keyword>
<keyword id="KW-0418">Kinase</keyword>
<keyword id="KW-0444">Lipid biosynthesis</keyword>
<keyword id="KW-0551">Lipid droplet</keyword>
<keyword id="KW-0443">Lipid metabolism</keyword>
<keyword id="KW-0547">Nucleotide-binding</keyword>
<keyword id="KW-0594">Phospholipid biosynthesis</keyword>
<keyword id="KW-1208">Phospholipid metabolism</keyword>
<keyword id="KW-0597">Phosphoprotein</keyword>
<keyword id="KW-1185">Reference proteome</keyword>
<keyword id="KW-0808">Transferase</keyword>
<organism>
    <name type="scientific">Mus musculus</name>
    <name type="common">Mouse</name>
    <dbReference type="NCBI Taxonomy" id="10090"/>
    <lineage>
        <taxon>Eukaryota</taxon>
        <taxon>Metazoa</taxon>
        <taxon>Chordata</taxon>
        <taxon>Craniata</taxon>
        <taxon>Vertebrata</taxon>
        <taxon>Euteleostomi</taxon>
        <taxon>Mammalia</taxon>
        <taxon>Eutheria</taxon>
        <taxon>Euarchontoglires</taxon>
        <taxon>Glires</taxon>
        <taxon>Rodentia</taxon>
        <taxon>Myomorpha</taxon>
        <taxon>Muroidea</taxon>
        <taxon>Muridae</taxon>
        <taxon>Murinae</taxon>
        <taxon>Mus</taxon>
        <taxon>Mus</taxon>
    </lineage>
</organism>
<comment type="function">
    <text evidence="1">Plays a key role in phospholipid biosynthesis by catalyzing the phosphorylation of free choline to phosphocholine, the first step in phosphatidylcholine biosynthesis. Also phosphorylates ethanolamine, thereby contributing to phosphatidylethanolamine biosynthesis. Has higher activity with choline.</text>
</comment>
<comment type="function">
    <molecule>Isoform 1</molecule>
    <text evidence="1">This isoform plays a key role in lipolysis of lipid droplets following glucose deprivation (By similarity). In response to glucose deprivation, phosphorylated by AMPK, promoting localization to lipid droplets (By similarity). Phosphorylation is followed by acetylation by KAT5, leading to dissociation of the homodimer into a monomer (By similarity). Monomeric CHKA isoform 1 is converted into a tyrosine-protein kinase, which phosphorylates lipid droplet structural proteins PLIN2 and PLIN3, leading to lipolysis of lipid droplets (By similarity).</text>
</comment>
<comment type="catalytic activity">
    <reaction evidence="1">
        <text>choline + ATP = phosphocholine + ADP + H(+)</text>
        <dbReference type="Rhea" id="RHEA:12837"/>
        <dbReference type="ChEBI" id="CHEBI:15354"/>
        <dbReference type="ChEBI" id="CHEBI:15378"/>
        <dbReference type="ChEBI" id="CHEBI:30616"/>
        <dbReference type="ChEBI" id="CHEBI:295975"/>
        <dbReference type="ChEBI" id="CHEBI:456216"/>
        <dbReference type="EC" id="2.7.1.32"/>
    </reaction>
    <physiologicalReaction direction="left-to-right" evidence="1">
        <dbReference type="Rhea" id="RHEA:12838"/>
    </physiologicalReaction>
</comment>
<comment type="catalytic activity">
    <reaction evidence="1">
        <text>ethanolamine + ATP = phosphoethanolamine + ADP + H(+)</text>
        <dbReference type="Rhea" id="RHEA:13069"/>
        <dbReference type="ChEBI" id="CHEBI:15378"/>
        <dbReference type="ChEBI" id="CHEBI:30616"/>
        <dbReference type="ChEBI" id="CHEBI:57603"/>
        <dbReference type="ChEBI" id="CHEBI:58190"/>
        <dbReference type="ChEBI" id="CHEBI:456216"/>
        <dbReference type="EC" id="2.7.1.82"/>
    </reaction>
    <physiologicalReaction direction="left-to-right" evidence="1">
        <dbReference type="Rhea" id="RHEA:13070"/>
    </physiologicalReaction>
</comment>
<comment type="catalytic activity">
    <molecule>Isoform 1</molecule>
    <reaction evidence="1">
        <text>L-tyrosyl-[protein] + ATP = O-phospho-L-tyrosyl-[protein] + ADP + H(+)</text>
        <dbReference type="Rhea" id="RHEA:10596"/>
        <dbReference type="Rhea" id="RHEA-COMP:10136"/>
        <dbReference type="Rhea" id="RHEA-COMP:20101"/>
        <dbReference type="ChEBI" id="CHEBI:15378"/>
        <dbReference type="ChEBI" id="CHEBI:30616"/>
        <dbReference type="ChEBI" id="CHEBI:46858"/>
        <dbReference type="ChEBI" id="CHEBI:61978"/>
        <dbReference type="ChEBI" id="CHEBI:456216"/>
    </reaction>
    <physiologicalReaction direction="left-to-right" evidence="1">
        <dbReference type="Rhea" id="RHEA:10597"/>
    </physiologicalReaction>
</comment>
<comment type="pathway">
    <text evidence="1">Phospholipid metabolism; phosphatidylcholine biosynthesis; phosphocholine from choline: step 1/1.</text>
</comment>
<comment type="pathway">
    <text evidence="1">Phospholipid metabolism; phosphatidylethanolamine biosynthesis; phosphatidylethanolamine from ethanolamine: step 1/3.</text>
</comment>
<comment type="subunit">
    <text evidence="4">Homodimer (PubMed:16490392). Heterodimer with CHKB (PubMed:16490392).</text>
</comment>
<comment type="subunit">
    <molecule>Isoform 1</molecule>
    <text evidence="1">Monomer; acetylation by KAT5 promotes dissociation of the homodimer and monomerization.</text>
</comment>
<comment type="subcellular location">
    <subcellularLocation>
        <location evidence="1">Cytoplasm</location>
        <location evidence="1">Cytosol</location>
    </subcellularLocation>
</comment>
<comment type="subcellular location">
    <molecule>Isoform 1</molecule>
    <subcellularLocation>
        <location evidence="1">Lipid droplet</location>
    </subcellularLocation>
    <text evidence="1">Isoform 1 localizes to lipid droplets following phosphorylation by AMPK.</text>
</comment>
<comment type="alternative products">
    <event type="alternative splicing"/>
    <isoform>
        <id>O54804-1</id>
        <name>1</name>
        <name evidence="7">CHETK-alpha2</name>
        <name evidence="7">CHKalpha2</name>
        <sequence type="displayed"/>
    </isoform>
    <isoform>
        <id>O54804-2</id>
        <name>2</name>
        <name evidence="7">CHETK-alpha1</name>
        <name evidence="7">CHKalpha1</name>
        <sequence type="described" ref="VSP_009684"/>
    </isoform>
</comment>
<comment type="tissue specificity">
    <text evidence="6">Expressed ubiquitously with the highest level in testis.</text>
</comment>
<comment type="PTM">
    <molecule>Isoform 1</molecule>
    <text evidence="1">Phosphorylated at Ser-275 by AMPK in response to glucose deprivation, leading to localization to lipid droplets.</text>
</comment>
<comment type="PTM">
    <molecule>Isoform 1</molecule>
    <text evidence="1">Acetylated by KAT5 at Lys-243 following phosphorylation by AMPK, leading to monomerization and conversion into a tyrosine-protein kinase.</text>
</comment>
<comment type="disruption phenotype">
    <text evidence="5">Death at an early embryonic stage. Embryos die after 3 to 5 days of development.</text>
</comment>
<comment type="similarity">
    <text evidence="10">Belongs to the choline/ethanolamine kinase family.</text>
</comment>
<comment type="sequence caution" evidence="10">
    <conflict type="miscellaneous discrepancy">
        <sequence resource="EMBL-CDS" id="AAH56758"/>
    </conflict>
    <text>Intron retention.</text>
</comment>
<comment type="sequence caution" evidence="10">
    <conflict type="erroneous gene model prediction">
        <sequence resource="EMBL-CDS" id="BAA88154"/>
    </conflict>
</comment>
<comment type="sequence caution" evidence="10">
    <conflict type="miscellaneous discrepancy">
        <sequence resource="EMBL-CDS" id="BAB29191"/>
    </conflict>
    <text>Intron retention.</text>
</comment>
<comment type="sequence caution" evidence="10">
    <conflict type="miscellaneous discrepancy">
        <sequence resource="EMBL-CDS" id="BAC34841"/>
    </conflict>
    <text>Intron retention.</text>
</comment>
<comment type="sequence caution" evidence="10">
    <conflict type="miscellaneous discrepancy">
        <sequence resource="EMBL-CDS" id="BAC35539"/>
    </conflict>
    <text>Intron retention.</text>
</comment>
<reference key="1">
    <citation type="journal article" date="1998" name="Biochim. Biophys. Acta">
        <title>Molecular cloning of mouse choline kinase and choline/ethanolamine kinase: their sequence comparison to the respective rat homologs.</title>
        <authorList>
            <person name="Aoyama C."/>
            <person name="Nakashima K."/>
            <person name="Ishidate K."/>
        </authorList>
    </citation>
    <scope>NUCLEOTIDE SEQUENCE [MRNA] (ISOFORM 2)</scope>
    <scope>TISSUE SPECIFICITY</scope>
    <source>
        <strain>Swiss Webster / NIH</strain>
    </source>
</reference>
<reference key="2">
    <citation type="journal article" date="2000" name="J. Lipid Res.">
        <title>Structure and characterization of the genes for murine choline/ethanolamine kinase isozymes alpha and beta.</title>
        <authorList>
            <person name="Aoyama C."/>
            <person name="Yamazaki N."/>
            <person name="Terada H."/>
            <person name="Ishidate K."/>
        </authorList>
    </citation>
    <scope>NUCLEOTIDE SEQUENCE [GENOMIC DNA] (ISOFORMS 1 AND 2)</scope>
    <source>
        <strain>129/Sv</strain>
        <tissue>Liver</tissue>
    </source>
</reference>
<reference key="3">
    <citation type="journal article" date="2009" name="PLoS Biol.">
        <title>Lineage-specific biology revealed by a finished genome assembly of the mouse.</title>
        <authorList>
            <person name="Church D.M."/>
            <person name="Goodstadt L."/>
            <person name="Hillier L.W."/>
            <person name="Zody M.C."/>
            <person name="Goldstein S."/>
            <person name="She X."/>
            <person name="Bult C.J."/>
            <person name="Agarwala R."/>
            <person name="Cherry J.L."/>
            <person name="DiCuccio M."/>
            <person name="Hlavina W."/>
            <person name="Kapustin Y."/>
            <person name="Meric P."/>
            <person name="Maglott D."/>
            <person name="Birtle Z."/>
            <person name="Marques A.C."/>
            <person name="Graves T."/>
            <person name="Zhou S."/>
            <person name="Teague B."/>
            <person name="Potamousis K."/>
            <person name="Churas C."/>
            <person name="Place M."/>
            <person name="Herschleb J."/>
            <person name="Runnheim R."/>
            <person name="Forrest D."/>
            <person name="Amos-Landgraf J."/>
            <person name="Schwartz D.C."/>
            <person name="Cheng Z."/>
            <person name="Lindblad-Toh K."/>
            <person name="Eichler E.E."/>
            <person name="Ponting C.P."/>
        </authorList>
    </citation>
    <scope>NUCLEOTIDE SEQUENCE [LARGE SCALE GENOMIC DNA]</scope>
    <source>
        <strain>C57BL/6J</strain>
    </source>
</reference>
<reference key="4">
    <citation type="submission" date="2005-07" db="EMBL/GenBank/DDBJ databases">
        <authorList>
            <person name="Mural R.J."/>
            <person name="Adams M.D."/>
            <person name="Myers E.W."/>
            <person name="Smith H.O."/>
            <person name="Venter J.C."/>
        </authorList>
    </citation>
    <scope>NUCLEOTIDE SEQUENCE [LARGE SCALE GENOMIC DNA]</scope>
</reference>
<reference key="5">
    <citation type="journal article" date="2004" name="Genome Res.">
        <title>The status, quality, and expansion of the NIH full-length cDNA project: the Mammalian Gene Collection (MGC).</title>
        <authorList>
            <consortium name="The MGC Project Team"/>
        </authorList>
    </citation>
    <scope>NUCLEOTIDE SEQUENCE [LARGE SCALE MRNA] OF 1-371 (ISOFORM 2)</scope>
    <scope>NUCLEOTIDE SEQUENCE [LARGE SCALE MRNA] OF 1-150 (ISOFORM 1)</scope>
    <source>
        <strain>C57BL/6J</strain>
        <tissue>Brain</tissue>
        <tissue>Limb</tissue>
    </source>
</reference>
<reference key="6">
    <citation type="journal article" date="2005" name="Science">
        <title>The transcriptional landscape of the mammalian genome.</title>
        <authorList>
            <person name="Carninci P."/>
            <person name="Kasukawa T."/>
            <person name="Katayama S."/>
            <person name="Gough J."/>
            <person name="Frith M.C."/>
            <person name="Maeda N."/>
            <person name="Oyama R."/>
            <person name="Ravasi T."/>
            <person name="Lenhard B."/>
            <person name="Wells C."/>
            <person name="Kodzius R."/>
            <person name="Shimokawa K."/>
            <person name="Bajic V.B."/>
            <person name="Brenner S.E."/>
            <person name="Batalov S."/>
            <person name="Forrest A.R."/>
            <person name="Zavolan M."/>
            <person name="Davis M.J."/>
            <person name="Wilming L.G."/>
            <person name="Aidinis V."/>
            <person name="Allen J.E."/>
            <person name="Ambesi-Impiombato A."/>
            <person name="Apweiler R."/>
            <person name="Aturaliya R.N."/>
            <person name="Bailey T.L."/>
            <person name="Bansal M."/>
            <person name="Baxter L."/>
            <person name="Beisel K.W."/>
            <person name="Bersano T."/>
            <person name="Bono H."/>
            <person name="Chalk A.M."/>
            <person name="Chiu K.P."/>
            <person name="Choudhary V."/>
            <person name="Christoffels A."/>
            <person name="Clutterbuck D.R."/>
            <person name="Crowe M.L."/>
            <person name="Dalla E."/>
            <person name="Dalrymple B.P."/>
            <person name="de Bono B."/>
            <person name="Della Gatta G."/>
            <person name="di Bernardo D."/>
            <person name="Down T."/>
            <person name="Engstrom P."/>
            <person name="Fagiolini M."/>
            <person name="Faulkner G."/>
            <person name="Fletcher C.F."/>
            <person name="Fukushima T."/>
            <person name="Furuno M."/>
            <person name="Futaki S."/>
            <person name="Gariboldi M."/>
            <person name="Georgii-Hemming P."/>
            <person name="Gingeras T.R."/>
            <person name="Gojobori T."/>
            <person name="Green R.E."/>
            <person name="Gustincich S."/>
            <person name="Harbers M."/>
            <person name="Hayashi Y."/>
            <person name="Hensch T.K."/>
            <person name="Hirokawa N."/>
            <person name="Hill D."/>
            <person name="Huminiecki L."/>
            <person name="Iacono M."/>
            <person name="Ikeo K."/>
            <person name="Iwama A."/>
            <person name="Ishikawa T."/>
            <person name="Jakt M."/>
            <person name="Kanapin A."/>
            <person name="Katoh M."/>
            <person name="Kawasawa Y."/>
            <person name="Kelso J."/>
            <person name="Kitamura H."/>
            <person name="Kitano H."/>
            <person name="Kollias G."/>
            <person name="Krishnan S.P."/>
            <person name="Kruger A."/>
            <person name="Kummerfeld S.K."/>
            <person name="Kurochkin I.V."/>
            <person name="Lareau L.F."/>
            <person name="Lazarevic D."/>
            <person name="Lipovich L."/>
            <person name="Liu J."/>
            <person name="Liuni S."/>
            <person name="McWilliam S."/>
            <person name="Madan Babu M."/>
            <person name="Madera M."/>
            <person name="Marchionni L."/>
            <person name="Matsuda H."/>
            <person name="Matsuzawa S."/>
            <person name="Miki H."/>
            <person name="Mignone F."/>
            <person name="Miyake S."/>
            <person name="Morris K."/>
            <person name="Mottagui-Tabar S."/>
            <person name="Mulder N."/>
            <person name="Nakano N."/>
            <person name="Nakauchi H."/>
            <person name="Ng P."/>
            <person name="Nilsson R."/>
            <person name="Nishiguchi S."/>
            <person name="Nishikawa S."/>
            <person name="Nori F."/>
            <person name="Ohara O."/>
            <person name="Okazaki Y."/>
            <person name="Orlando V."/>
            <person name="Pang K.C."/>
            <person name="Pavan W.J."/>
            <person name="Pavesi G."/>
            <person name="Pesole G."/>
            <person name="Petrovsky N."/>
            <person name="Piazza S."/>
            <person name="Reed J."/>
            <person name="Reid J.F."/>
            <person name="Ring B.Z."/>
            <person name="Ringwald M."/>
            <person name="Rost B."/>
            <person name="Ruan Y."/>
            <person name="Salzberg S.L."/>
            <person name="Sandelin A."/>
            <person name="Schneider C."/>
            <person name="Schoenbach C."/>
            <person name="Sekiguchi K."/>
            <person name="Semple C.A."/>
            <person name="Seno S."/>
            <person name="Sessa L."/>
            <person name="Sheng Y."/>
            <person name="Shibata Y."/>
            <person name="Shimada H."/>
            <person name="Shimada K."/>
            <person name="Silva D."/>
            <person name="Sinclair B."/>
            <person name="Sperling S."/>
            <person name="Stupka E."/>
            <person name="Sugiura K."/>
            <person name="Sultana R."/>
            <person name="Takenaka Y."/>
            <person name="Taki K."/>
            <person name="Tammoja K."/>
            <person name="Tan S.L."/>
            <person name="Tang S."/>
            <person name="Taylor M.S."/>
            <person name="Tegner J."/>
            <person name="Teichmann S.A."/>
            <person name="Ueda H.R."/>
            <person name="van Nimwegen E."/>
            <person name="Verardo R."/>
            <person name="Wei C.L."/>
            <person name="Yagi K."/>
            <person name="Yamanishi H."/>
            <person name="Zabarovsky E."/>
            <person name="Zhu S."/>
            <person name="Zimmer A."/>
            <person name="Hide W."/>
            <person name="Bult C."/>
            <person name="Grimmond S.M."/>
            <person name="Teasdale R.D."/>
            <person name="Liu E.T."/>
            <person name="Brusic V."/>
            <person name="Quackenbush J."/>
            <person name="Wahlestedt C."/>
            <person name="Mattick J.S."/>
            <person name="Hume D.A."/>
            <person name="Kai C."/>
            <person name="Sasaki D."/>
            <person name="Tomaru Y."/>
            <person name="Fukuda S."/>
            <person name="Kanamori-Katayama M."/>
            <person name="Suzuki M."/>
            <person name="Aoki J."/>
            <person name="Arakawa T."/>
            <person name="Iida J."/>
            <person name="Imamura K."/>
            <person name="Itoh M."/>
            <person name="Kato T."/>
            <person name="Kawaji H."/>
            <person name="Kawagashira N."/>
            <person name="Kawashima T."/>
            <person name="Kojima M."/>
            <person name="Kondo S."/>
            <person name="Konno H."/>
            <person name="Nakano K."/>
            <person name="Ninomiya N."/>
            <person name="Nishio T."/>
            <person name="Okada M."/>
            <person name="Plessy C."/>
            <person name="Shibata K."/>
            <person name="Shiraki T."/>
            <person name="Suzuki S."/>
            <person name="Tagami M."/>
            <person name="Waki K."/>
            <person name="Watahiki A."/>
            <person name="Okamura-Oho Y."/>
            <person name="Suzuki H."/>
            <person name="Kawai J."/>
            <person name="Hayashizaki Y."/>
        </authorList>
    </citation>
    <scope>NUCLEOTIDE SEQUENCE [LARGE SCALE MRNA] OF 1-168 (ISOFORM 1)</scope>
    <source>
        <strain>C57BL/6J</strain>
        <tissue>Embryonic eye</tissue>
        <tissue>Embryonic head</tissue>
        <tissue>Eye</tissue>
    </source>
</reference>
<reference key="7">
    <citation type="journal article" date="2006" name="Biochim. Biophys. Acta">
        <title>Deletion and alanine mutation analyses for the formation of active homo- or hetero-dimer complexes of mouse choline kinase-alpha and -beta.</title>
        <authorList>
            <person name="Liao H."/>
            <person name="Aoyama C."/>
            <person name="Ishidate K."/>
            <person name="Teraoka H."/>
        </authorList>
    </citation>
    <scope>SUBUNIT</scope>
</reference>
<reference key="8">
    <citation type="journal article" date="2008" name="J. Biol. Chem.">
        <title>Early embryonic lethality caused by disruption of the gene for choline kinase alpha, the first enzyme in phosphatidylcholine biosynthesis.</title>
        <authorList>
            <person name="Wu G."/>
            <person name="Aoyama C."/>
            <person name="Young S.G."/>
            <person name="Vance D.E."/>
        </authorList>
    </citation>
    <scope>DISRUPTION PHENOTYPE</scope>
</reference>
<reference key="9">
    <citation type="journal article" date="2010" name="Cell">
        <title>A tissue-specific atlas of mouse protein phosphorylation and expression.</title>
        <authorList>
            <person name="Huttlin E.L."/>
            <person name="Jedrychowski M.P."/>
            <person name="Elias J.E."/>
            <person name="Goswami T."/>
            <person name="Rad R."/>
            <person name="Beausoleil S.A."/>
            <person name="Villen J."/>
            <person name="Haas W."/>
            <person name="Sowa M.E."/>
            <person name="Gygi S.P."/>
        </authorList>
    </citation>
    <scope>IDENTIFICATION BY MASS SPECTROMETRY [LARGE SCALE ANALYSIS]</scope>
    <source>
        <tissue>Testis</tissue>
    </source>
</reference>
<protein>
    <recommendedName>
        <fullName>Choline kinase alpha</fullName>
        <shortName>CK</shortName>
        <ecNumber evidence="1">2.7.1.32</ecNumber>
    </recommendedName>
    <alternativeName>
        <fullName>CHETK-alpha</fullName>
    </alternativeName>
    <alternativeName>
        <fullName>Ethanolamine kinase</fullName>
        <shortName>EK</shortName>
        <ecNumber evidence="1">2.7.1.82</ecNumber>
    </alternativeName>
</protein>
<accession>O54804</accession>
<accession>G5E853</accession>
<accession>Q8BPL3</accession>
<accession>Q8BPW6</accession>
<accession>Q9CXP3</accession>
<accession>Q9QX56</accession>
<name>CHKA_MOUSE</name>
<proteinExistence type="evidence at protein level"/>